<sequence length="429" mass="50565">MTTVSYVTILLTVLVQVLTSDAKATNNKRELSSGLKERSLSDDAPQFWKGRFSRSEEDPQFWKGRFSDPQFWKGRFSDPQFWKGRFSDPQFWKGRFSDPQFWKGRFSDPQFWKGRFSDPQFWKGRFSDGTKRENDPQYWKGRFSRSFEDQPDSEAQFWKGRFARTSTGEKREPQYWKGRFSRDSVPGRYGRELQGRFGRELQGRFGREAQGRFGRELQGRFGREFQGRFGREDQGRFGREDQGRFGREDQGRFGREDQGRFGREDQGRFGREDQGRFGRELQGRFGREDQGRFGREDQGRFGREDQGRFGRELQGRFGREDQGRFGREDQGRFGREDLAKEDQGRFGREDLAKEDQGRFGREDIAKEDQGRFGRNAAAAAKKRTIDVIDIESDPKPQTRFRDGKDMQEKRKVEKKDKIEKSDDALAKIS</sequence>
<protein>
    <recommendedName>
        <fullName>Antho-RFamide neuropeptides type 2</fullName>
    </recommendedName>
    <component>
        <recommendedName>
            <fullName>Antho-RFamide</fullName>
        </recommendedName>
    </component>
</protein>
<evidence type="ECO:0000255" key="1"/>
<evidence type="ECO:0000256" key="2">
    <source>
        <dbReference type="SAM" id="MobiDB-lite"/>
    </source>
</evidence>
<evidence type="ECO:0000269" key="3">
    <source>
    </source>
</evidence>
<evidence type="ECO:0000305" key="4"/>
<dbReference type="EMBL" id="M99170">
    <property type="protein sequence ID" value="AAA27739.1"/>
    <property type="molecule type" value="mRNA"/>
</dbReference>
<dbReference type="SMR" id="Q16994"/>
<dbReference type="GO" id="GO:0005576">
    <property type="term" value="C:extracellular region"/>
    <property type="evidence" value="ECO:0007669"/>
    <property type="project" value="UniProtKB-SubCell"/>
</dbReference>
<dbReference type="GO" id="GO:0007218">
    <property type="term" value="P:neuropeptide signaling pathway"/>
    <property type="evidence" value="ECO:0007669"/>
    <property type="project" value="UniProtKB-KW"/>
</dbReference>
<dbReference type="InterPro" id="IPR052690">
    <property type="entry name" value="Antho-RFamide"/>
</dbReference>
<dbReference type="InterPro" id="IPR002544">
    <property type="entry name" value="FMRFamid-related_peptide-like"/>
</dbReference>
<dbReference type="PANTHER" id="PTHR31709">
    <property type="entry name" value="LEUCINE ZIPPER PROTEIN 4-RELATED"/>
    <property type="match status" value="1"/>
</dbReference>
<dbReference type="PANTHER" id="PTHR31709:SF3">
    <property type="entry name" value="LEUCINE ZIPPER PROTEIN 4-RELATED"/>
    <property type="match status" value="1"/>
</dbReference>
<dbReference type="Pfam" id="PF01581">
    <property type="entry name" value="FARP"/>
    <property type="match status" value="7"/>
</dbReference>
<comment type="function">
    <text>Not known but it could act as a transmitter at neuromuscular synapses.</text>
</comment>
<comment type="subcellular location">
    <subcellularLocation>
        <location>Secreted</location>
    </subcellularLocation>
</comment>
<comment type="similarity">
    <text evidence="4">Belongs to the FARP (FMRFamide related peptide) family.</text>
</comment>
<reference key="1">
    <citation type="journal article" date="1992" name="J. Biol. Chem.">
        <title>Identification of a novel type of processing sites in the precursor for the sea anemone neuropeptide Antho-RFamide (&lt;Glu-Gly-Arg-Phe-NH2) from Anthopleura elegantissima.</title>
        <authorList>
            <person name="Schmutzler C."/>
            <person name="Darmer D."/>
            <person name="Diekhoff D."/>
            <person name="Grimmelikhuijzen C.J.P."/>
        </authorList>
    </citation>
    <scope>NUCLEOTIDE SEQUENCE [MRNA]</scope>
</reference>
<reference key="2">
    <citation type="journal article" date="1986" name="Proc. Natl. Acad. Sci. U.S.A.">
        <title>Isolation of pyroGlu-Gly-Arg-Phe-NH2 (Antho-RFamide), a neuropeptide from sea anemones.</title>
        <authorList>
            <person name="Grimmelikhuijzen C.J.P."/>
            <person name="Graff D."/>
        </authorList>
    </citation>
    <scope>PARTIAL PROTEIN SEQUENCE (ANTHO-RFAMIDE)</scope>
    <scope>PYROGLUTAMATE FORMATION AT GLN-234; GLN-242; GLN-250; GLN-258; GLN-266; GLN-274; GLN-290; GLN-298; GLN-306; GLN-322; GLN-330; GLN-343; GLN-356 AND GLN-369</scope>
    <scope>AMIDATION AT PHE-237; PHE-245; PHE-253; PHE-261; PHE-269; PHE-277; PHE-293; PHE-301; PHE-309; PHE-325; PHE-333; PHE-346; PHE-359 AND PHE-372</scope>
</reference>
<proteinExistence type="evidence at protein level"/>
<accession>Q16994</accession>
<keyword id="KW-0027">Amidation</keyword>
<keyword id="KW-0165">Cleavage on pair of basic residues</keyword>
<keyword id="KW-0903">Direct protein sequencing</keyword>
<keyword id="KW-0527">Neuropeptide</keyword>
<keyword id="KW-0873">Pyrrolidone carboxylic acid</keyword>
<keyword id="KW-0677">Repeat</keyword>
<keyword id="KW-0964">Secreted</keyword>
<keyword id="KW-0732">Signal</keyword>
<organism>
    <name type="scientific">Anthopleura elegantissima</name>
    <name type="common">Green aggregating anemone</name>
    <name type="synonym">Actinia elegantissima</name>
    <dbReference type="NCBI Taxonomy" id="6110"/>
    <lineage>
        <taxon>Eukaryota</taxon>
        <taxon>Metazoa</taxon>
        <taxon>Cnidaria</taxon>
        <taxon>Anthozoa</taxon>
        <taxon>Hexacorallia</taxon>
        <taxon>Actiniaria</taxon>
        <taxon>Actiniidae</taxon>
        <taxon>Anthopleura</taxon>
    </lineage>
</organism>
<name>FMR2_ANTEL</name>
<feature type="signal peptide" evidence="1">
    <location>
        <begin position="1"/>
        <end position="22"/>
    </location>
</feature>
<feature type="propeptide" id="PRO_0000009823">
    <location>
        <begin position="23"/>
        <end position="233"/>
    </location>
</feature>
<feature type="peptide" id="PRO_0000009824" description="Antho-RFamide">
    <location>
        <begin position="234"/>
        <end position="237"/>
    </location>
</feature>
<feature type="propeptide" id="PRO_0000009825">
    <location>
        <begin position="239"/>
        <end position="241"/>
    </location>
</feature>
<feature type="peptide" id="PRO_0000009826" description="Antho-RFamide">
    <location>
        <begin position="242"/>
        <end position="245"/>
    </location>
</feature>
<feature type="propeptide" id="PRO_0000009827">
    <location>
        <begin position="247"/>
        <end position="249"/>
    </location>
</feature>
<feature type="peptide" id="PRO_0000009828" description="Antho-RFamide">
    <location>
        <begin position="250"/>
        <end position="253"/>
    </location>
</feature>
<feature type="propeptide" id="PRO_0000009829">
    <location>
        <begin position="255"/>
        <end position="257"/>
    </location>
</feature>
<feature type="peptide" id="PRO_0000009830" description="Antho-RFamide">
    <location>
        <begin position="258"/>
        <end position="261"/>
    </location>
</feature>
<feature type="propeptide" id="PRO_0000009831">
    <location>
        <begin position="263"/>
        <end position="265"/>
    </location>
</feature>
<feature type="peptide" id="PRO_0000009832" description="Antho-RFamide">
    <location>
        <begin position="266"/>
        <end position="269"/>
    </location>
</feature>
<feature type="propeptide" id="PRO_0000009833">
    <location>
        <begin position="271"/>
        <end position="273"/>
    </location>
</feature>
<feature type="peptide" id="PRO_0000009834" description="Antho-RFamide">
    <location>
        <begin position="274"/>
        <end position="277"/>
    </location>
</feature>
<feature type="propeptide" id="PRO_0000009835">
    <location>
        <begin position="279"/>
        <end position="289"/>
    </location>
</feature>
<feature type="peptide" id="PRO_0000009836" description="Antho-RFamide">
    <location>
        <begin position="290"/>
        <end position="293"/>
    </location>
</feature>
<feature type="propeptide" id="PRO_0000009837">
    <location>
        <begin position="295"/>
        <end position="297"/>
    </location>
</feature>
<feature type="peptide" id="PRO_0000009838" description="Antho-RFamide">
    <location>
        <begin position="298"/>
        <end position="301"/>
    </location>
</feature>
<feature type="propeptide" id="PRO_0000009839">
    <location>
        <begin position="303"/>
        <end position="305"/>
    </location>
</feature>
<feature type="peptide" id="PRO_0000009840" description="Antho-RFamide">
    <location>
        <begin position="306"/>
        <end position="309"/>
    </location>
</feature>
<feature type="propeptide" id="PRO_0000009841">
    <location>
        <begin position="311"/>
        <end position="321"/>
    </location>
</feature>
<feature type="peptide" id="PRO_0000009842" description="Antho-RFamide">
    <location>
        <begin position="322"/>
        <end position="325"/>
    </location>
</feature>
<feature type="propeptide" id="PRO_0000009843">
    <location>
        <begin position="327"/>
        <end position="329"/>
    </location>
</feature>
<feature type="peptide" id="PRO_0000009844" description="Antho-RFamide">
    <location>
        <begin position="330"/>
        <end position="333"/>
    </location>
</feature>
<feature type="propeptide" id="PRO_0000009845">
    <location>
        <begin position="335"/>
        <end position="342"/>
    </location>
</feature>
<feature type="peptide" id="PRO_0000009846" description="Antho-RFamide">
    <location>
        <begin position="343"/>
        <end position="346"/>
    </location>
</feature>
<feature type="propeptide" id="PRO_0000009847">
    <location>
        <begin position="348"/>
        <end position="355"/>
    </location>
</feature>
<feature type="peptide" id="PRO_0000009848" description="Antho-RFamide">
    <location>
        <begin position="356"/>
        <end position="359"/>
    </location>
</feature>
<feature type="propeptide" id="PRO_0000009849">
    <location>
        <begin position="361"/>
        <end position="368"/>
    </location>
</feature>
<feature type="peptide" id="PRO_0000009850" description="Antho-RFamide">
    <location>
        <begin position="369"/>
        <end position="372"/>
    </location>
</feature>
<feature type="propeptide" id="PRO_0000009851">
    <location>
        <begin position="374"/>
        <end position="429"/>
    </location>
</feature>
<feature type="region of interest" description="Disordered" evidence="2">
    <location>
        <begin position="230"/>
        <end position="429"/>
    </location>
</feature>
<feature type="compositionally biased region" description="Basic and acidic residues" evidence="2">
    <location>
        <begin position="230"/>
        <end position="371"/>
    </location>
</feature>
<feature type="compositionally biased region" description="Basic and acidic residues" evidence="2">
    <location>
        <begin position="392"/>
        <end position="429"/>
    </location>
</feature>
<feature type="modified residue" description="Pyrrolidone carboxylic acid" evidence="3">
    <location>
        <position position="234"/>
    </location>
</feature>
<feature type="modified residue" description="Phenylalanine amide" evidence="3">
    <location>
        <position position="237"/>
    </location>
</feature>
<feature type="modified residue" description="Pyrrolidone carboxylic acid" evidence="3">
    <location>
        <position position="242"/>
    </location>
</feature>
<feature type="modified residue" description="Phenylalanine amide" evidence="3">
    <location>
        <position position="245"/>
    </location>
</feature>
<feature type="modified residue" description="Pyrrolidone carboxylic acid" evidence="3">
    <location>
        <position position="250"/>
    </location>
</feature>
<feature type="modified residue" description="Phenylalanine amide" evidence="3">
    <location>
        <position position="253"/>
    </location>
</feature>
<feature type="modified residue" description="Pyrrolidone carboxylic acid" evidence="3">
    <location>
        <position position="258"/>
    </location>
</feature>
<feature type="modified residue" description="Phenylalanine amide" evidence="3">
    <location>
        <position position="261"/>
    </location>
</feature>
<feature type="modified residue" description="Pyrrolidone carboxylic acid" evidence="3">
    <location>
        <position position="266"/>
    </location>
</feature>
<feature type="modified residue" description="Phenylalanine amide" evidence="3">
    <location>
        <position position="269"/>
    </location>
</feature>
<feature type="modified residue" description="Pyrrolidone carboxylic acid" evidence="3">
    <location>
        <position position="274"/>
    </location>
</feature>
<feature type="modified residue" description="Phenylalanine amide" evidence="3">
    <location>
        <position position="277"/>
    </location>
</feature>
<feature type="modified residue" description="Pyrrolidone carboxylic acid" evidence="3">
    <location>
        <position position="290"/>
    </location>
</feature>
<feature type="modified residue" description="Phenylalanine amide" evidence="3">
    <location>
        <position position="293"/>
    </location>
</feature>
<feature type="modified residue" description="Pyrrolidone carboxylic acid" evidence="3">
    <location>
        <position position="298"/>
    </location>
</feature>
<feature type="modified residue" description="Phenylalanine amide" evidence="3">
    <location>
        <position position="301"/>
    </location>
</feature>
<feature type="modified residue" description="Pyrrolidone carboxylic acid" evidence="3">
    <location>
        <position position="306"/>
    </location>
</feature>
<feature type="modified residue" description="Phenylalanine amide" evidence="3">
    <location>
        <position position="309"/>
    </location>
</feature>
<feature type="modified residue" description="Pyrrolidone carboxylic acid" evidence="3">
    <location>
        <position position="322"/>
    </location>
</feature>
<feature type="modified residue" description="Phenylalanine amide" evidence="3">
    <location>
        <position position="325"/>
    </location>
</feature>
<feature type="modified residue" description="Pyrrolidone carboxylic acid" evidence="3">
    <location>
        <position position="330"/>
    </location>
</feature>
<feature type="modified residue" description="Phenylalanine amide" evidence="3">
    <location>
        <position position="333"/>
    </location>
</feature>
<feature type="modified residue" description="Pyrrolidone carboxylic acid" evidence="3">
    <location>
        <position position="343"/>
    </location>
</feature>
<feature type="modified residue" description="Phenylalanine amide" evidence="3">
    <location>
        <position position="346"/>
    </location>
</feature>
<feature type="modified residue" description="Pyrrolidone carboxylic acid" evidence="3">
    <location>
        <position position="356"/>
    </location>
</feature>
<feature type="modified residue" description="Phenylalanine amide" evidence="3">
    <location>
        <position position="359"/>
    </location>
</feature>
<feature type="modified residue" description="Pyrrolidone carboxylic acid" evidence="3">
    <location>
        <position position="369"/>
    </location>
</feature>
<feature type="modified residue" description="Phenylalanine amide" evidence="3">
    <location>
        <position position="372"/>
    </location>
</feature>